<evidence type="ECO:0000250" key="1"/>
<evidence type="ECO:0000250" key="2">
    <source>
        <dbReference type="UniProtKB" id="P00813"/>
    </source>
</evidence>
<evidence type="ECO:0000250" key="3">
    <source>
        <dbReference type="UniProtKB" id="P03958"/>
    </source>
</evidence>
<evidence type="ECO:0000250" key="4">
    <source>
        <dbReference type="UniProtKB" id="P56658"/>
    </source>
</evidence>
<evidence type="ECO:0000305" key="5"/>
<organism>
    <name type="scientific">Xenopus tropicalis</name>
    <name type="common">Western clawed frog</name>
    <name type="synonym">Silurana tropicalis</name>
    <dbReference type="NCBI Taxonomy" id="8364"/>
    <lineage>
        <taxon>Eukaryota</taxon>
        <taxon>Metazoa</taxon>
        <taxon>Chordata</taxon>
        <taxon>Craniata</taxon>
        <taxon>Vertebrata</taxon>
        <taxon>Euteleostomi</taxon>
        <taxon>Amphibia</taxon>
        <taxon>Batrachia</taxon>
        <taxon>Anura</taxon>
        <taxon>Pipoidea</taxon>
        <taxon>Pipidae</taxon>
        <taxon>Xenopodinae</taxon>
        <taxon>Xenopus</taxon>
        <taxon>Silurana</taxon>
    </lineage>
</organism>
<accession>Q63ZU0</accession>
<keyword id="KW-0965">Cell junction</keyword>
<keyword id="KW-1003">Cell membrane</keyword>
<keyword id="KW-0963">Cytoplasm</keyword>
<keyword id="KW-0968">Cytoplasmic vesicle</keyword>
<keyword id="KW-0378">Hydrolase</keyword>
<keyword id="KW-0458">Lysosome</keyword>
<keyword id="KW-0472">Membrane</keyword>
<keyword id="KW-0479">Metal-binding</keyword>
<keyword id="KW-0546">Nucleotide metabolism</keyword>
<keyword id="KW-1185">Reference proteome</keyword>
<keyword id="KW-0862">Zinc</keyword>
<protein>
    <recommendedName>
        <fullName>Adenosine deaminase</fullName>
        <ecNumber evidence="2">3.5.4.4</ecNumber>
    </recommendedName>
    <alternativeName>
        <fullName>Adenosine aminohydrolase</fullName>
    </alternativeName>
</protein>
<comment type="function">
    <text evidence="2">Catalyzes the hydrolytic deamination of adenosine and 2-deoxyadenosine. Plays an important role in purine metabolism and in adenosine homeostasis. Modulates signaling by extracellular adenosine, and so contributes indirectly to cellular signaling events. May act as a positive regulator of T-cell coactivation (By similarity).</text>
</comment>
<comment type="catalytic activity">
    <reaction evidence="2">
        <text>adenosine + H2O + H(+) = inosine + NH4(+)</text>
        <dbReference type="Rhea" id="RHEA:24408"/>
        <dbReference type="ChEBI" id="CHEBI:15377"/>
        <dbReference type="ChEBI" id="CHEBI:15378"/>
        <dbReference type="ChEBI" id="CHEBI:16335"/>
        <dbReference type="ChEBI" id="CHEBI:17596"/>
        <dbReference type="ChEBI" id="CHEBI:28938"/>
        <dbReference type="EC" id="3.5.4.4"/>
    </reaction>
    <physiologicalReaction direction="left-to-right" evidence="2">
        <dbReference type="Rhea" id="RHEA:24409"/>
    </physiologicalReaction>
</comment>
<comment type="catalytic activity">
    <reaction evidence="2">
        <text>2'-deoxyadenosine + H2O + H(+) = 2'-deoxyinosine + NH4(+)</text>
        <dbReference type="Rhea" id="RHEA:28190"/>
        <dbReference type="ChEBI" id="CHEBI:15377"/>
        <dbReference type="ChEBI" id="CHEBI:15378"/>
        <dbReference type="ChEBI" id="CHEBI:17256"/>
        <dbReference type="ChEBI" id="CHEBI:28938"/>
        <dbReference type="ChEBI" id="CHEBI:28997"/>
        <dbReference type="EC" id="3.5.4.4"/>
    </reaction>
    <physiologicalReaction direction="left-to-right" evidence="2">
        <dbReference type="Rhea" id="RHEA:28191"/>
    </physiologicalReaction>
</comment>
<comment type="cofactor">
    <cofactor evidence="3">
        <name>Zn(2+)</name>
        <dbReference type="ChEBI" id="CHEBI:29105"/>
    </cofactor>
    <text evidence="3">Binds 1 zinc ion per subunit.</text>
</comment>
<comment type="subcellular location">
    <subcellularLocation>
        <location evidence="2">Cell membrane</location>
        <topology evidence="1">Peripheral membrane protein</topology>
        <orientation evidence="1">Extracellular side</orientation>
    </subcellularLocation>
    <subcellularLocation>
        <location evidence="2">Cell junction</location>
    </subcellularLocation>
    <subcellularLocation>
        <location evidence="3">Cytoplasmic vesicle lumen</location>
    </subcellularLocation>
    <subcellularLocation>
        <location evidence="1">Cytoplasm</location>
    </subcellularLocation>
    <subcellularLocation>
        <location evidence="2">Lysosome</location>
    </subcellularLocation>
</comment>
<comment type="similarity">
    <text evidence="5">Belongs to the metallo-dependent hydrolases superfamily. Adenosine and AMP deaminases family.</text>
</comment>
<sequence length="358" mass="40555">MESKAFNKPKVELHVHLDGSIKPETIIHFAKKRQIKLPADTVEGLLEHVSYKEPLSLTEFLSKFNHYMPAIAGDREAIKRIAYEFVEMKAKEGVIYVEVRYSPHFLANSKVEPIPWGQKEGDITPDEVVDLVNQGLRKGEKAFNIKARSILCCMRHMPSWSTEVVELCKKYQNDTVVAIDLAGDESLNCESYPGHRKAYEEAVKCGIHRTVHAGEVGPSSVVKEAVEVLKAERIGHGYHTTEDPNLYKELLEKNMHFEVCPWSSYLTGACHPDFTKHPATQFRKDKANYSLNTDDPLIFGSTLDVDYSIAAKHMGFTEEEFKRVNINAAKSSFLPESEKKELLYKLYEAYGMILSTGL</sequence>
<proteinExistence type="evidence at transcript level"/>
<feature type="chain" id="PRO_0000194358" description="Adenosine deaminase">
    <location>
        <begin position="1"/>
        <end position="358"/>
    </location>
</feature>
<feature type="active site" description="Proton donor" evidence="3">
    <location>
        <position position="215"/>
    </location>
</feature>
<feature type="binding site" evidence="4">
    <location>
        <position position="14"/>
    </location>
    <ligand>
        <name>Zn(2+)</name>
        <dbReference type="ChEBI" id="CHEBI:29105"/>
        <note>catalytic</note>
    </ligand>
</feature>
<feature type="binding site" evidence="4">
    <location>
        <position position="16"/>
    </location>
    <ligand>
        <name>substrate</name>
    </ligand>
</feature>
<feature type="binding site" evidence="4">
    <location>
        <position position="16"/>
    </location>
    <ligand>
        <name>Zn(2+)</name>
        <dbReference type="ChEBI" id="CHEBI:29105"/>
        <note>catalytic</note>
    </ligand>
</feature>
<feature type="binding site" evidence="4">
    <location>
        <position position="18"/>
    </location>
    <ligand>
        <name>substrate</name>
    </ligand>
</feature>
<feature type="binding site" evidence="4">
    <location>
        <position position="183"/>
    </location>
    <ligand>
        <name>substrate</name>
    </ligand>
</feature>
<feature type="binding site" evidence="4">
    <location>
        <position position="212"/>
    </location>
    <ligand>
        <name>Zn(2+)</name>
        <dbReference type="ChEBI" id="CHEBI:29105"/>
        <note>catalytic</note>
    </ligand>
</feature>
<feature type="binding site" evidence="4">
    <location>
        <position position="294"/>
    </location>
    <ligand>
        <name>Zn(2+)</name>
        <dbReference type="ChEBI" id="CHEBI:29105"/>
        <note>catalytic</note>
    </ligand>
</feature>
<feature type="binding site" evidence="4">
    <location>
        <position position="295"/>
    </location>
    <ligand>
        <name>substrate</name>
    </ligand>
</feature>
<feature type="site" description="Important for catalytic activity" evidence="3">
    <location>
        <position position="236"/>
    </location>
</feature>
<name>ADA_XENTR</name>
<dbReference type="EC" id="3.5.4.4" evidence="2"/>
<dbReference type="EMBL" id="BC082820">
    <property type="protein sequence ID" value="AAH82820.1"/>
    <property type="molecule type" value="mRNA"/>
</dbReference>
<dbReference type="RefSeq" id="NP_001011025.1">
    <property type="nucleotide sequence ID" value="NM_001011025.1"/>
</dbReference>
<dbReference type="SMR" id="Q63ZU0"/>
<dbReference type="FunCoup" id="Q63ZU0">
    <property type="interactions" value="230"/>
</dbReference>
<dbReference type="STRING" id="8364.ENSXETP00000009691"/>
<dbReference type="PaxDb" id="8364-ENSXETP00000007489"/>
<dbReference type="DNASU" id="496434"/>
<dbReference type="GeneID" id="496434"/>
<dbReference type="KEGG" id="xtr:496434"/>
<dbReference type="AGR" id="Xenbase:XB-GENE-950501"/>
<dbReference type="CTD" id="100"/>
<dbReference type="Xenbase" id="XB-GENE-950501">
    <property type="gene designation" value="ada"/>
</dbReference>
<dbReference type="eggNOG" id="KOG1097">
    <property type="taxonomic scope" value="Eukaryota"/>
</dbReference>
<dbReference type="InParanoid" id="Q63ZU0"/>
<dbReference type="OrthoDB" id="272271at2759"/>
<dbReference type="Reactome" id="R-XTR-74217">
    <property type="pathway name" value="Purine salvage"/>
</dbReference>
<dbReference type="Reactome" id="R-XTR-9755088">
    <property type="pathway name" value="Ribavirin ADME"/>
</dbReference>
<dbReference type="Proteomes" id="UP000008143">
    <property type="component" value="Chromosome 10"/>
</dbReference>
<dbReference type="Bgee" id="ENSXETG00000003459">
    <property type="expression patterns" value="Expressed in skeletal muscle tissue and 14 other cell types or tissues"/>
</dbReference>
<dbReference type="GO" id="GO:0070161">
    <property type="term" value="C:anchoring junction"/>
    <property type="evidence" value="ECO:0007669"/>
    <property type="project" value="UniProtKB-SubCell"/>
</dbReference>
<dbReference type="GO" id="GO:0060205">
    <property type="term" value="C:cytoplasmic vesicle lumen"/>
    <property type="evidence" value="ECO:0007669"/>
    <property type="project" value="UniProtKB-SubCell"/>
</dbReference>
<dbReference type="GO" id="GO:0005764">
    <property type="term" value="C:lysosome"/>
    <property type="evidence" value="ECO:0007669"/>
    <property type="project" value="UniProtKB-SubCell"/>
</dbReference>
<dbReference type="GO" id="GO:0005886">
    <property type="term" value="C:plasma membrane"/>
    <property type="evidence" value="ECO:0007669"/>
    <property type="project" value="UniProtKB-SubCell"/>
</dbReference>
<dbReference type="GO" id="GO:0046936">
    <property type="term" value="F:2'-deoxyadenosine deaminase activity"/>
    <property type="evidence" value="ECO:0007669"/>
    <property type="project" value="RHEA"/>
</dbReference>
<dbReference type="GO" id="GO:0004000">
    <property type="term" value="F:adenosine deaminase activity"/>
    <property type="evidence" value="ECO:0000250"/>
    <property type="project" value="UniProtKB"/>
</dbReference>
<dbReference type="GO" id="GO:0008270">
    <property type="term" value="F:zinc ion binding"/>
    <property type="evidence" value="ECO:0000250"/>
    <property type="project" value="UniProtKB"/>
</dbReference>
<dbReference type="GO" id="GO:0006154">
    <property type="term" value="P:adenosine catabolic process"/>
    <property type="evidence" value="ECO:0000250"/>
    <property type="project" value="UniProtKB"/>
</dbReference>
<dbReference type="GO" id="GO:0046103">
    <property type="term" value="P:inosine biosynthetic process"/>
    <property type="evidence" value="ECO:0000250"/>
    <property type="project" value="UniProtKB"/>
</dbReference>
<dbReference type="GO" id="GO:0009117">
    <property type="term" value="P:nucleotide metabolic process"/>
    <property type="evidence" value="ECO:0007669"/>
    <property type="project" value="UniProtKB-KW"/>
</dbReference>
<dbReference type="GO" id="GO:0009168">
    <property type="term" value="P:purine ribonucleoside monophosphate biosynthetic process"/>
    <property type="evidence" value="ECO:0007669"/>
    <property type="project" value="InterPro"/>
</dbReference>
<dbReference type="CDD" id="cd01320">
    <property type="entry name" value="ADA"/>
    <property type="match status" value="1"/>
</dbReference>
<dbReference type="FunFam" id="3.20.20.140:FF:000038">
    <property type="entry name" value="Adenosine deaminase"/>
    <property type="match status" value="1"/>
</dbReference>
<dbReference type="Gene3D" id="3.20.20.140">
    <property type="entry name" value="Metal-dependent hydrolases"/>
    <property type="match status" value="1"/>
</dbReference>
<dbReference type="HAMAP" id="MF_00540">
    <property type="entry name" value="A_deaminase"/>
    <property type="match status" value="1"/>
</dbReference>
<dbReference type="InterPro" id="IPR006650">
    <property type="entry name" value="A/AMP_deam_AS"/>
</dbReference>
<dbReference type="InterPro" id="IPR028893">
    <property type="entry name" value="A_deaminase"/>
</dbReference>
<dbReference type="InterPro" id="IPR001365">
    <property type="entry name" value="A_deaminase_dom"/>
</dbReference>
<dbReference type="InterPro" id="IPR006330">
    <property type="entry name" value="Ado/ade_deaminase"/>
</dbReference>
<dbReference type="InterPro" id="IPR032466">
    <property type="entry name" value="Metal_Hydrolase"/>
</dbReference>
<dbReference type="NCBIfam" id="TIGR01430">
    <property type="entry name" value="aden_deam"/>
    <property type="match status" value="1"/>
</dbReference>
<dbReference type="PANTHER" id="PTHR11409">
    <property type="entry name" value="ADENOSINE DEAMINASE"/>
    <property type="match status" value="1"/>
</dbReference>
<dbReference type="PANTHER" id="PTHR11409:SF49">
    <property type="entry name" value="ADENOSINE DEAMINASE"/>
    <property type="match status" value="1"/>
</dbReference>
<dbReference type="Pfam" id="PF00962">
    <property type="entry name" value="A_deaminase"/>
    <property type="match status" value="1"/>
</dbReference>
<dbReference type="SUPFAM" id="SSF51556">
    <property type="entry name" value="Metallo-dependent hydrolases"/>
    <property type="match status" value="1"/>
</dbReference>
<dbReference type="PROSITE" id="PS00485">
    <property type="entry name" value="A_DEAMINASE"/>
    <property type="match status" value="1"/>
</dbReference>
<reference key="1">
    <citation type="submission" date="2004-09" db="EMBL/GenBank/DDBJ databases">
        <authorList>
            <consortium name="NIH - Xenopus Gene Collection (XGC) project"/>
        </authorList>
    </citation>
    <scope>NUCLEOTIDE SEQUENCE [LARGE SCALE MRNA]</scope>
    <source>
        <tissue>Embryo</tissue>
    </source>
</reference>
<gene>
    <name type="primary">ada</name>
</gene>